<organism>
    <name type="scientific">Streptomyces coelicolor (strain ATCC BAA-471 / A3(2) / M145)</name>
    <dbReference type="NCBI Taxonomy" id="100226"/>
    <lineage>
        <taxon>Bacteria</taxon>
        <taxon>Bacillati</taxon>
        <taxon>Actinomycetota</taxon>
        <taxon>Actinomycetes</taxon>
        <taxon>Kitasatosporales</taxon>
        <taxon>Streptomycetaceae</taxon>
        <taxon>Streptomyces</taxon>
        <taxon>Streptomyces albidoflavus group</taxon>
    </lineage>
</organism>
<name>GRPE_STRCO</name>
<sequence length="225" mass="23874">MTEETPGFEEKPDVPSGATPDDAEPQAASEEGAAPAGDASENAGLVAQLDQVRTALNERTADLQRLQAEYQNYRRRVERDRVAVKEVAVANLLSELLPVLDDVGRAREHGELVGGFKSVAESLETTVAKLGLQQFGKEGEPFDPTIHEALMHSYAPDVTETTCVAILQPGYRIGERTIRPARVAVAEPQPGAQTVKPAEDAAEAQDSSGAEDDAGTKESGGPDEG</sequence>
<dbReference type="EMBL" id="X77458">
    <property type="protein sequence ID" value="CAA54607.1"/>
    <property type="molecule type" value="Genomic_DNA"/>
</dbReference>
<dbReference type="EMBL" id="L46700">
    <property type="protein sequence ID" value="AAB29452.1"/>
    <property type="molecule type" value="Genomic_DNA"/>
</dbReference>
<dbReference type="EMBL" id="AL939117">
    <property type="protein sequence ID" value="CAB91161.1"/>
    <property type="molecule type" value="Genomic_DNA"/>
</dbReference>
<dbReference type="PIR" id="S41947">
    <property type="entry name" value="PN0643"/>
</dbReference>
<dbReference type="RefSeq" id="NP_627863.1">
    <property type="nucleotide sequence ID" value="NC_003888.3"/>
</dbReference>
<dbReference type="RefSeq" id="WP_003975269.1">
    <property type="nucleotide sequence ID" value="NZ_VNID01000003.1"/>
</dbReference>
<dbReference type="SMR" id="Q05562"/>
<dbReference type="FunCoup" id="Q05562">
    <property type="interactions" value="327"/>
</dbReference>
<dbReference type="STRING" id="100226.gene:17761293"/>
<dbReference type="PaxDb" id="100226-SCO3670"/>
<dbReference type="GeneID" id="91385372"/>
<dbReference type="KEGG" id="sco:SCO3670"/>
<dbReference type="PATRIC" id="fig|100226.15.peg.3728"/>
<dbReference type="eggNOG" id="COG0576">
    <property type="taxonomic scope" value="Bacteria"/>
</dbReference>
<dbReference type="HOGENOM" id="CLU_057217_4_2_11"/>
<dbReference type="InParanoid" id="Q05562"/>
<dbReference type="OrthoDB" id="5191115at2"/>
<dbReference type="PhylomeDB" id="Q05562"/>
<dbReference type="Proteomes" id="UP000001973">
    <property type="component" value="Chromosome"/>
</dbReference>
<dbReference type="GO" id="GO:0005737">
    <property type="term" value="C:cytoplasm"/>
    <property type="evidence" value="ECO:0007669"/>
    <property type="project" value="UniProtKB-SubCell"/>
</dbReference>
<dbReference type="GO" id="GO:0000774">
    <property type="term" value="F:adenyl-nucleotide exchange factor activity"/>
    <property type="evidence" value="ECO:0000318"/>
    <property type="project" value="GO_Central"/>
</dbReference>
<dbReference type="GO" id="GO:0042803">
    <property type="term" value="F:protein homodimerization activity"/>
    <property type="evidence" value="ECO:0007669"/>
    <property type="project" value="InterPro"/>
</dbReference>
<dbReference type="GO" id="GO:0051087">
    <property type="term" value="F:protein-folding chaperone binding"/>
    <property type="evidence" value="ECO:0007669"/>
    <property type="project" value="InterPro"/>
</dbReference>
<dbReference type="GO" id="GO:0051082">
    <property type="term" value="F:unfolded protein binding"/>
    <property type="evidence" value="ECO:0000318"/>
    <property type="project" value="GO_Central"/>
</dbReference>
<dbReference type="GO" id="GO:0006457">
    <property type="term" value="P:protein folding"/>
    <property type="evidence" value="ECO:0007669"/>
    <property type="project" value="InterPro"/>
</dbReference>
<dbReference type="CDD" id="cd00446">
    <property type="entry name" value="GrpE"/>
    <property type="match status" value="1"/>
</dbReference>
<dbReference type="FunFam" id="2.30.22.10:FF:000001">
    <property type="entry name" value="Protein GrpE"/>
    <property type="match status" value="1"/>
</dbReference>
<dbReference type="FunFam" id="3.90.20.20:FF:000010">
    <property type="entry name" value="Protein GrpE"/>
    <property type="match status" value="1"/>
</dbReference>
<dbReference type="Gene3D" id="3.90.20.20">
    <property type="match status" value="1"/>
</dbReference>
<dbReference type="Gene3D" id="2.30.22.10">
    <property type="entry name" value="Head domain of nucleotide exchange factor GrpE"/>
    <property type="match status" value="1"/>
</dbReference>
<dbReference type="HAMAP" id="MF_01151">
    <property type="entry name" value="GrpE"/>
    <property type="match status" value="1"/>
</dbReference>
<dbReference type="InterPro" id="IPR000740">
    <property type="entry name" value="GrpE"/>
</dbReference>
<dbReference type="InterPro" id="IPR013805">
    <property type="entry name" value="GrpE_coiled_coil"/>
</dbReference>
<dbReference type="InterPro" id="IPR009012">
    <property type="entry name" value="GrpE_head"/>
</dbReference>
<dbReference type="NCBIfam" id="NF010760">
    <property type="entry name" value="PRK14163.1"/>
    <property type="match status" value="1"/>
</dbReference>
<dbReference type="PANTHER" id="PTHR21237">
    <property type="entry name" value="GRPE PROTEIN"/>
    <property type="match status" value="1"/>
</dbReference>
<dbReference type="PANTHER" id="PTHR21237:SF23">
    <property type="entry name" value="GRPE PROTEIN HOMOLOG, MITOCHONDRIAL"/>
    <property type="match status" value="1"/>
</dbReference>
<dbReference type="Pfam" id="PF01025">
    <property type="entry name" value="GrpE"/>
    <property type="match status" value="1"/>
</dbReference>
<dbReference type="PRINTS" id="PR00773">
    <property type="entry name" value="GRPEPROTEIN"/>
</dbReference>
<dbReference type="SUPFAM" id="SSF58014">
    <property type="entry name" value="Coiled-coil domain of nucleotide exchange factor GrpE"/>
    <property type="match status" value="1"/>
</dbReference>
<dbReference type="SUPFAM" id="SSF51064">
    <property type="entry name" value="Head domain of nucleotide exchange factor GrpE"/>
    <property type="match status" value="1"/>
</dbReference>
<dbReference type="PROSITE" id="PS01071">
    <property type="entry name" value="GRPE"/>
    <property type="match status" value="1"/>
</dbReference>
<gene>
    <name evidence="1" type="primary">grpE</name>
    <name type="ordered locus">SCO3670</name>
    <name type="ORF">SCH44.10c</name>
</gene>
<accession>Q05562</accession>
<reference key="1">
    <citation type="journal article" date="1996" name="DNA Seq.">
        <title>Cloning and sequencing of the dnaK locus in Streptomyces coelicolor A3(2).</title>
        <authorList>
            <person name="Brans A."/>
            <person name="Loriaux A."/>
            <person name="Joris B."/>
            <person name="Dusart J."/>
        </authorList>
    </citation>
    <scope>NUCLEOTIDE SEQUENCE [GENOMIC DNA]</scope>
    <source>
        <strain>A3(2) / NRRL B-16638</strain>
    </source>
</reference>
<reference key="2">
    <citation type="journal article" date="2002" name="Nature">
        <title>Complete genome sequence of the model actinomycete Streptomyces coelicolor A3(2).</title>
        <authorList>
            <person name="Bentley S.D."/>
            <person name="Chater K.F."/>
            <person name="Cerdeno-Tarraga A.-M."/>
            <person name="Challis G.L."/>
            <person name="Thomson N.R."/>
            <person name="James K.D."/>
            <person name="Harris D.E."/>
            <person name="Quail M.A."/>
            <person name="Kieser H."/>
            <person name="Harper D."/>
            <person name="Bateman A."/>
            <person name="Brown S."/>
            <person name="Chandra G."/>
            <person name="Chen C.W."/>
            <person name="Collins M."/>
            <person name="Cronin A."/>
            <person name="Fraser A."/>
            <person name="Goble A."/>
            <person name="Hidalgo J."/>
            <person name="Hornsby T."/>
            <person name="Howarth S."/>
            <person name="Huang C.-H."/>
            <person name="Kieser T."/>
            <person name="Larke L."/>
            <person name="Murphy L.D."/>
            <person name="Oliver K."/>
            <person name="O'Neil S."/>
            <person name="Rabbinowitsch E."/>
            <person name="Rajandream M.A."/>
            <person name="Rutherford K.M."/>
            <person name="Rutter S."/>
            <person name="Seeger K."/>
            <person name="Saunders D."/>
            <person name="Sharp S."/>
            <person name="Squares R."/>
            <person name="Squares S."/>
            <person name="Taylor K."/>
            <person name="Warren T."/>
            <person name="Wietzorrek A."/>
            <person name="Woodward J.R."/>
            <person name="Barrell B.G."/>
            <person name="Parkhill J."/>
            <person name="Hopwood D.A."/>
        </authorList>
    </citation>
    <scope>NUCLEOTIDE SEQUENCE [LARGE SCALE GENOMIC DNA]</scope>
    <source>
        <strain>ATCC BAA-471 / A3(2) / M145</strain>
    </source>
</reference>
<reference key="3">
    <citation type="journal article" date="1993" name="Gene">
        <title>Cloning and sequencing of the dnaK region of Streptomyces coelicolor A3(2).</title>
        <authorList>
            <person name="Bucca G."/>
            <person name="Smith C.P."/>
            <person name="Alberti M."/>
            <person name="Seidita G."/>
            <person name="Passantino R."/>
            <person name="Puglia A.M."/>
        </authorList>
    </citation>
    <scope>NUCLEOTIDE SEQUENCE [GENOMIC DNA] OF 1-166</scope>
    <source>
        <strain>A3(2) / NRRL B-16638</strain>
    </source>
</reference>
<feature type="chain" id="PRO_0000113869" description="Protein GrpE">
    <location>
        <begin position="1"/>
        <end position="225"/>
    </location>
</feature>
<feature type="region of interest" description="Disordered" evidence="2">
    <location>
        <begin position="1"/>
        <end position="44"/>
    </location>
</feature>
<feature type="region of interest" description="Disordered" evidence="2">
    <location>
        <begin position="183"/>
        <end position="225"/>
    </location>
</feature>
<keyword id="KW-0143">Chaperone</keyword>
<keyword id="KW-0963">Cytoplasm</keyword>
<keyword id="KW-1185">Reference proteome</keyword>
<keyword id="KW-0346">Stress response</keyword>
<proteinExistence type="inferred from homology"/>
<evidence type="ECO:0000255" key="1">
    <source>
        <dbReference type="HAMAP-Rule" id="MF_01151"/>
    </source>
</evidence>
<evidence type="ECO:0000256" key="2">
    <source>
        <dbReference type="SAM" id="MobiDB-lite"/>
    </source>
</evidence>
<protein>
    <recommendedName>
        <fullName evidence="1">Protein GrpE</fullName>
    </recommendedName>
    <alternativeName>
        <fullName evidence="1">HSP-70 cofactor</fullName>
    </alternativeName>
</protein>
<comment type="function">
    <text evidence="1">Participates actively in the response to hyperosmotic and heat shock by preventing the aggregation of stress-denatured proteins, in association with DnaK and GrpE. It is the nucleotide exchange factor for DnaK and may function as a thermosensor. Unfolded proteins bind initially to DnaJ; upon interaction with the DnaJ-bound protein, DnaK hydrolyzes its bound ATP, resulting in the formation of a stable complex. GrpE releases ADP from DnaK; ATP binding to DnaK triggers the release of the substrate protein, thus completing the reaction cycle. Several rounds of ATP-dependent interactions between DnaJ, DnaK and GrpE are required for fully efficient folding.</text>
</comment>
<comment type="subunit">
    <text evidence="1">Homodimer.</text>
</comment>
<comment type="subcellular location">
    <subcellularLocation>
        <location evidence="1">Cytoplasm</location>
    </subcellularLocation>
</comment>
<comment type="similarity">
    <text evidence="1">Belongs to the GrpE family.</text>
</comment>